<dbReference type="EC" id="3.1.4.11" evidence="7 15"/>
<dbReference type="EMBL" id="AF044576">
    <property type="protein sequence ID" value="AAC38963.1"/>
    <property type="molecule type" value="mRNA"/>
</dbReference>
<dbReference type="EMBL" id="AM992255">
    <property type="protein sequence ID" value="CAQ51495.1"/>
    <property type="molecule type" value="mRNA"/>
</dbReference>
<dbReference type="EMBL" id="BX284606">
    <property type="protein sequence ID" value="CAB60281.3"/>
    <property type="molecule type" value="Genomic_DNA"/>
</dbReference>
<dbReference type="EMBL" id="BX284606">
    <property type="protein sequence ID" value="CAB60282.4"/>
    <property type="molecule type" value="Genomic_DNA"/>
</dbReference>
<dbReference type="EMBL" id="BX284606">
    <property type="protein sequence ID" value="CAD44124.1"/>
    <property type="molecule type" value="Genomic_DNA"/>
</dbReference>
<dbReference type="EMBL" id="BX284606">
    <property type="protein sequence ID" value="CAQ35039.1"/>
    <property type="molecule type" value="Genomic_DNA"/>
</dbReference>
<dbReference type="EMBL" id="BX284606">
    <property type="protein sequence ID" value="CAQ58108.1"/>
    <property type="molecule type" value="Genomic_DNA"/>
</dbReference>
<dbReference type="PIR" id="T42440">
    <property type="entry name" value="T42440"/>
</dbReference>
<dbReference type="RefSeq" id="NP_001024617.1">
    <molecule id="G5EFI8-1"/>
    <property type="nucleotide sequence ID" value="NM_001029446.3"/>
</dbReference>
<dbReference type="RefSeq" id="NP_001024619.1">
    <molecule id="G5EFI8-3"/>
    <property type="nucleotide sequence ID" value="NM_001029448.6"/>
</dbReference>
<dbReference type="RefSeq" id="NP_001123141.1">
    <property type="nucleotide sequence ID" value="NM_001129669.2"/>
</dbReference>
<dbReference type="RefSeq" id="NP_001129926.1">
    <molecule id="G5EFI8-5"/>
    <property type="nucleotide sequence ID" value="NM_001136454.3"/>
</dbReference>
<dbReference type="RefSeq" id="NP_509805.3">
    <molecule id="G5EFI8-2"/>
    <property type="nucleotide sequence ID" value="NM_077404.5"/>
</dbReference>
<dbReference type="SMR" id="G5EFI8"/>
<dbReference type="FunCoup" id="G5EFI8">
    <property type="interactions" value="145"/>
</dbReference>
<dbReference type="STRING" id="6239.F31B12.1a.1"/>
<dbReference type="PaxDb" id="6239-F31B12.1a"/>
<dbReference type="EnsemblMetazoa" id="F31B12.1a.1">
    <molecule id="G5EFI8-1"/>
    <property type="protein sequence ID" value="F31B12.1a.1"/>
    <property type="gene ID" value="WBGene00004036"/>
</dbReference>
<dbReference type="EnsemblMetazoa" id="F31B12.1b.1">
    <molecule id="G5EFI8-2"/>
    <property type="protein sequence ID" value="F31B12.1b.1"/>
    <property type="gene ID" value="WBGene00004036"/>
</dbReference>
<dbReference type="EnsemblMetazoa" id="F31B12.1c.1">
    <molecule id="G5EFI8-3"/>
    <property type="protein sequence ID" value="F31B12.1c.1"/>
    <property type="gene ID" value="WBGene00004036"/>
</dbReference>
<dbReference type="EnsemblMetazoa" id="F31B12.1d.1">
    <property type="protein sequence ID" value="F31B12.1d.1"/>
    <property type="gene ID" value="WBGene00004036"/>
</dbReference>
<dbReference type="EnsemblMetazoa" id="F31B12.1e.1">
    <molecule id="G5EFI8-5"/>
    <property type="protein sequence ID" value="F31B12.1e.1"/>
    <property type="gene ID" value="WBGene00004036"/>
</dbReference>
<dbReference type="GeneID" id="181274"/>
<dbReference type="KEGG" id="cel:CELE_F31B12.1"/>
<dbReference type="AGR" id="WB:WBGene00004036"/>
<dbReference type="CTD" id="181274"/>
<dbReference type="WormBase" id="F31B12.1a">
    <molecule id="G5EFI8-1"/>
    <property type="protein sequence ID" value="CE28227"/>
    <property type="gene ID" value="WBGene00004036"/>
    <property type="gene designation" value="plc-1"/>
</dbReference>
<dbReference type="WormBase" id="F31B12.1b">
    <molecule id="G5EFI8-2"/>
    <property type="protein sequence ID" value="CE31494"/>
    <property type="gene ID" value="WBGene00004036"/>
    <property type="gene designation" value="plc-1"/>
</dbReference>
<dbReference type="WormBase" id="F31B12.1c">
    <molecule id="G5EFI8-3"/>
    <property type="protein sequence ID" value="CE31495"/>
    <property type="gene ID" value="WBGene00004036"/>
    <property type="gene designation" value="plc-1"/>
</dbReference>
<dbReference type="WormBase" id="F31B12.1d">
    <molecule id="G5EFI8-4"/>
    <property type="protein sequence ID" value="CE42555"/>
    <property type="gene ID" value="WBGene00004036"/>
    <property type="gene designation" value="plc-1"/>
</dbReference>
<dbReference type="WormBase" id="F31B12.1e">
    <molecule id="G5EFI8-5"/>
    <property type="protein sequence ID" value="CE42678"/>
    <property type="gene ID" value="WBGene00004036"/>
    <property type="gene designation" value="plc-1"/>
</dbReference>
<dbReference type="eggNOG" id="KOG0169">
    <property type="taxonomic scope" value="Eukaryota"/>
</dbReference>
<dbReference type="GeneTree" id="ENSGT00940000157356"/>
<dbReference type="InParanoid" id="G5EFI8"/>
<dbReference type="OMA" id="KKNYMAY"/>
<dbReference type="OrthoDB" id="269822at2759"/>
<dbReference type="PhylomeDB" id="G5EFI8"/>
<dbReference type="Reactome" id="R-CEL-1855204">
    <property type="pathway name" value="Synthesis of IP3 and IP4 in the cytosol"/>
</dbReference>
<dbReference type="PRO" id="PR:G5EFI8"/>
<dbReference type="Proteomes" id="UP000001940">
    <property type="component" value="Chromosome X"/>
</dbReference>
<dbReference type="Bgee" id="WBGene00004036">
    <property type="expression patterns" value="Expressed in larva and 3 other cell types or tissues"/>
</dbReference>
<dbReference type="ExpressionAtlas" id="G5EFI8">
    <property type="expression patterns" value="baseline and differential"/>
</dbReference>
<dbReference type="GO" id="GO:0005095">
    <property type="term" value="F:GTPase inhibitor activity"/>
    <property type="evidence" value="ECO:0000314"/>
    <property type="project" value="WormBase"/>
</dbReference>
<dbReference type="GO" id="GO:0005085">
    <property type="term" value="F:guanyl-nucleotide exchange factor activity"/>
    <property type="evidence" value="ECO:0007669"/>
    <property type="project" value="UniProtKB-KW"/>
</dbReference>
<dbReference type="GO" id="GO:0046872">
    <property type="term" value="F:metal ion binding"/>
    <property type="evidence" value="ECO:0007669"/>
    <property type="project" value="UniProtKB-KW"/>
</dbReference>
<dbReference type="GO" id="GO:0004435">
    <property type="term" value="F:phosphatidylinositol-4,5-bisphosphate phospholipase C activity"/>
    <property type="evidence" value="ECO:0000314"/>
    <property type="project" value="WormBase"/>
</dbReference>
<dbReference type="GO" id="GO:0031267">
    <property type="term" value="F:small GTPase binding"/>
    <property type="evidence" value="ECO:0000353"/>
    <property type="project" value="WormBase"/>
</dbReference>
<dbReference type="GO" id="GO:1902634">
    <property type="term" value="P:1-phosphatidyl-1D-myo-inositol 4,5-bisphosphate catabolic process"/>
    <property type="evidence" value="ECO:0000314"/>
    <property type="project" value="WormBase"/>
</dbReference>
<dbReference type="GO" id="GO:0002253">
    <property type="term" value="P:activation of immune response"/>
    <property type="evidence" value="ECO:0000315"/>
    <property type="project" value="UniProtKB"/>
</dbReference>
<dbReference type="GO" id="GO:0050830">
    <property type="term" value="P:defense response to Gram-positive bacterium"/>
    <property type="evidence" value="ECO:0000315"/>
    <property type="project" value="UniProtKB"/>
</dbReference>
<dbReference type="GO" id="GO:0007186">
    <property type="term" value="P:G protein-coupled receptor signaling pathway"/>
    <property type="evidence" value="ECO:0000318"/>
    <property type="project" value="GO_Central"/>
</dbReference>
<dbReference type="GO" id="GO:0046488">
    <property type="term" value="P:phosphatidylinositol metabolic process"/>
    <property type="evidence" value="ECO:0000318"/>
    <property type="project" value="GO_Central"/>
</dbReference>
<dbReference type="GO" id="GO:0048015">
    <property type="term" value="P:phosphatidylinositol-mediated signaling"/>
    <property type="evidence" value="ECO:0000318"/>
    <property type="project" value="GO_Central"/>
</dbReference>
<dbReference type="GO" id="GO:0042307">
    <property type="term" value="P:positive regulation of protein import into nucleus"/>
    <property type="evidence" value="ECO:0000315"/>
    <property type="project" value="UniProtKB"/>
</dbReference>
<dbReference type="GO" id="GO:0007265">
    <property type="term" value="P:Ras protein signal transduction"/>
    <property type="evidence" value="ECO:0000318"/>
    <property type="project" value="GO_Central"/>
</dbReference>
<dbReference type="GO" id="GO:0051209">
    <property type="term" value="P:release of sequestered calcium ion into cytosol"/>
    <property type="evidence" value="ECO:0000318"/>
    <property type="project" value="GO_Central"/>
</dbReference>
<dbReference type="CDD" id="cd00275">
    <property type="entry name" value="C2_PLC_like"/>
    <property type="match status" value="1"/>
</dbReference>
<dbReference type="CDD" id="cd16203">
    <property type="entry name" value="EFh_PI-PLCepsilon"/>
    <property type="match status" value="1"/>
</dbReference>
<dbReference type="CDD" id="cd08596">
    <property type="entry name" value="PI-PLCc_epsilon"/>
    <property type="match status" value="1"/>
</dbReference>
<dbReference type="CDD" id="cd01780">
    <property type="entry name" value="RA2_PLC-epsilon"/>
    <property type="match status" value="1"/>
</dbReference>
<dbReference type="FunFam" id="3.20.20.190:FF:000084">
    <property type="match status" value="1"/>
</dbReference>
<dbReference type="FunFam" id="1.10.238.10:FF:000388">
    <property type="entry name" value="Phosphoinositide phospholipase C"/>
    <property type="match status" value="1"/>
</dbReference>
<dbReference type="FunFam" id="2.60.40.150:FF:000183">
    <property type="entry name" value="Phosphoinositide phospholipase C"/>
    <property type="match status" value="1"/>
</dbReference>
<dbReference type="FunFam" id="3.10.20.90:FF:000238">
    <property type="entry name" value="Phosphoinositide phospholipase C"/>
    <property type="match status" value="1"/>
</dbReference>
<dbReference type="FunFam" id="3.10.20.90:FF:000512">
    <property type="entry name" value="Phosphoinositide phospholipase C"/>
    <property type="match status" value="1"/>
</dbReference>
<dbReference type="Gene3D" id="2.60.40.150">
    <property type="entry name" value="C2 domain"/>
    <property type="match status" value="1"/>
</dbReference>
<dbReference type="Gene3D" id="1.10.238.10">
    <property type="entry name" value="EF-hand"/>
    <property type="match status" value="1"/>
</dbReference>
<dbReference type="Gene3D" id="3.20.20.190">
    <property type="entry name" value="Phosphatidylinositol (PI) phosphodiesterase"/>
    <property type="match status" value="1"/>
</dbReference>
<dbReference type="Gene3D" id="3.10.20.90">
    <property type="entry name" value="Phosphatidylinositol 3-kinase Catalytic Subunit, Chain A, domain 1"/>
    <property type="match status" value="2"/>
</dbReference>
<dbReference type="Gene3D" id="1.10.840.10">
    <property type="entry name" value="Ras guanine-nucleotide exchange factors catalytic domain"/>
    <property type="match status" value="1"/>
</dbReference>
<dbReference type="InterPro" id="IPR000008">
    <property type="entry name" value="C2_dom"/>
</dbReference>
<dbReference type="InterPro" id="IPR035892">
    <property type="entry name" value="C2_domain_sf"/>
</dbReference>
<dbReference type="InterPro" id="IPR011992">
    <property type="entry name" value="EF-hand-dom_pair"/>
</dbReference>
<dbReference type="InterPro" id="IPR001192">
    <property type="entry name" value="PI-PLC_fam"/>
</dbReference>
<dbReference type="InterPro" id="IPR046973">
    <property type="entry name" value="PLC-epsilon1_cat"/>
</dbReference>
<dbReference type="InterPro" id="IPR028398">
    <property type="entry name" value="PLC-epsilon1_RA2"/>
</dbReference>
<dbReference type="InterPro" id="IPR017946">
    <property type="entry name" value="PLC-like_Pdiesterase_TIM-brl"/>
</dbReference>
<dbReference type="InterPro" id="IPR015359">
    <property type="entry name" value="PLC_EF-hand-like"/>
</dbReference>
<dbReference type="InterPro" id="IPR046974">
    <property type="entry name" value="PLC_epsilon1_EF"/>
</dbReference>
<dbReference type="InterPro" id="IPR000909">
    <property type="entry name" value="PLipase_C_PInositol-sp_X_dom"/>
</dbReference>
<dbReference type="InterPro" id="IPR001711">
    <property type="entry name" value="PLipase_C_Pinositol-sp_Y"/>
</dbReference>
<dbReference type="InterPro" id="IPR000159">
    <property type="entry name" value="RA_dom"/>
</dbReference>
<dbReference type="InterPro" id="IPR023578">
    <property type="entry name" value="Ras_GEF_dom_sf"/>
</dbReference>
<dbReference type="InterPro" id="IPR001895">
    <property type="entry name" value="RASGEF_cat_dom"/>
</dbReference>
<dbReference type="InterPro" id="IPR036964">
    <property type="entry name" value="RASGEF_cat_dom_sf"/>
</dbReference>
<dbReference type="InterPro" id="IPR029071">
    <property type="entry name" value="Ubiquitin-like_domsf"/>
</dbReference>
<dbReference type="PANTHER" id="PTHR10336:SF6">
    <property type="entry name" value="1-PHOSPHATIDYLINOSITOL 4,5-BISPHOSPHATE PHOSPHODIESTERASE EPSILON-1"/>
    <property type="match status" value="1"/>
</dbReference>
<dbReference type="PANTHER" id="PTHR10336">
    <property type="entry name" value="PHOSPHOINOSITIDE-SPECIFIC PHOSPHOLIPASE C FAMILY PROTEIN"/>
    <property type="match status" value="1"/>
</dbReference>
<dbReference type="Pfam" id="PF00168">
    <property type="entry name" value="C2"/>
    <property type="match status" value="1"/>
</dbReference>
<dbReference type="Pfam" id="PF09279">
    <property type="entry name" value="EF-hand_like"/>
    <property type="match status" value="1"/>
</dbReference>
<dbReference type="Pfam" id="PF00388">
    <property type="entry name" value="PI-PLC-X"/>
    <property type="match status" value="1"/>
</dbReference>
<dbReference type="Pfam" id="PF00387">
    <property type="entry name" value="PI-PLC-Y"/>
    <property type="match status" value="1"/>
</dbReference>
<dbReference type="Pfam" id="PF00788">
    <property type="entry name" value="RA"/>
    <property type="match status" value="2"/>
</dbReference>
<dbReference type="Pfam" id="PF00617">
    <property type="entry name" value="RasGEF"/>
    <property type="match status" value="1"/>
</dbReference>
<dbReference type="PRINTS" id="PR00390">
    <property type="entry name" value="PHPHLIPASEC"/>
</dbReference>
<dbReference type="SMART" id="SM00239">
    <property type="entry name" value="C2"/>
    <property type="match status" value="1"/>
</dbReference>
<dbReference type="SMART" id="SM00148">
    <property type="entry name" value="PLCXc"/>
    <property type="match status" value="1"/>
</dbReference>
<dbReference type="SMART" id="SM00149">
    <property type="entry name" value="PLCYc"/>
    <property type="match status" value="1"/>
</dbReference>
<dbReference type="SMART" id="SM00314">
    <property type="entry name" value="RA"/>
    <property type="match status" value="2"/>
</dbReference>
<dbReference type="SMART" id="SM00147">
    <property type="entry name" value="RasGEF"/>
    <property type="match status" value="1"/>
</dbReference>
<dbReference type="SUPFAM" id="SSF49562">
    <property type="entry name" value="C2 domain (Calcium/lipid-binding domain, CaLB)"/>
    <property type="match status" value="1"/>
</dbReference>
<dbReference type="SUPFAM" id="SSF47473">
    <property type="entry name" value="EF-hand"/>
    <property type="match status" value="1"/>
</dbReference>
<dbReference type="SUPFAM" id="SSF51695">
    <property type="entry name" value="PLC-like phosphodiesterases"/>
    <property type="match status" value="1"/>
</dbReference>
<dbReference type="SUPFAM" id="SSF48366">
    <property type="entry name" value="Ras GEF"/>
    <property type="match status" value="1"/>
</dbReference>
<dbReference type="SUPFAM" id="SSF54236">
    <property type="entry name" value="Ubiquitin-like"/>
    <property type="match status" value="2"/>
</dbReference>
<dbReference type="PROSITE" id="PS50004">
    <property type="entry name" value="C2"/>
    <property type="match status" value="1"/>
</dbReference>
<dbReference type="PROSITE" id="PS50007">
    <property type="entry name" value="PIPLC_X_DOMAIN"/>
    <property type="match status" value="1"/>
</dbReference>
<dbReference type="PROSITE" id="PS50008">
    <property type="entry name" value="PIPLC_Y_DOMAIN"/>
    <property type="match status" value="1"/>
</dbReference>
<dbReference type="PROSITE" id="PS50200">
    <property type="entry name" value="RA"/>
    <property type="match status" value="2"/>
</dbReference>
<dbReference type="PROSITE" id="PS50009">
    <property type="entry name" value="RASGEF_CAT"/>
    <property type="match status" value="1"/>
</dbReference>
<feature type="chain" id="PRO_0000437464" description="1-phosphatidylinositol 4,5-bisphosphate phosphodiesterase epsilon-1" evidence="17">
    <location>
        <begin position="1"/>
        <end position="1898"/>
    </location>
</feature>
<feature type="domain" description="Ras-GEF" evidence="4">
    <location>
        <begin position="66"/>
        <end position="328"/>
    </location>
</feature>
<feature type="domain" description="PI-PLC X-box" evidence="5">
    <location>
        <begin position="910"/>
        <end position="1058"/>
    </location>
</feature>
<feature type="domain" description="PI-PLC Y-box" evidence="6">
    <location>
        <begin position="1279"/>
        <end position="1385"/>
    </location>
</feature>
<feature type="domain" description="C2" evidence="2">
    <location>
        <begin position="1391"/>
        <end position="1517"/>
    </location>
</feature>
<feature type="domain" description="Ras-associating 1" evidence="3">
    <location>
        <begin position="1570"/>
        <end position="1665"/>
    </location>
</feature>
<feature type="domain" description="Ras-associating 2" evidence="3">
    <location>
        <begin position="1738"/>
        <end position="1857"/>
    </location>
</feature>
<feature type="region of interest" description="Disordered" evidence="8">
    <location>
        <begin position="419"/>
        <end position="444"/>
    </location>
</feature>
<feature type="region of interest" description="Disordered" evidence="8">
    <location>
        <begin position="569"/>
        <end position="722"/>
    </location>
</feature>
<feature type="region of interest" description="Disordered" evidence="8">
    <location>
        <begin position="1082"/>
        <end position="1178"/>
    </location>
</feature>
<feature type="region of interest" description="Disordered" evidence="8">
    <location>
        <begin position="1238"/>
        <end position="1274"/>
    </location>
</feature>
<feature type="region of interest" description="Disordered" evidence="8">
    <location>
        <begin position="1680"/>
        <end position="1711"/>
    </location>
</feature>
<feature type="compositionally biased region" description="Polar residues" evidence="8">
    <location>
        <begin position="569"/>
        <end position="583"/>
    </location>
</feature>
<feature type="compositionally biased region" description="Basic residues" evidence="8">
    <location>
        <begin position="590"/>
        <end position="605"/>
    </location>
</feature>
<feature type="compositionally biased region" description="Low complexity" evidence="8">
    <location>
        <begin position="625"/>
        <end position="637"/>
    </location>
</feature>
<feature type="compositionally biased region" description="Low complexity" evidence="8">
    <location>
        <begin position="666"/>
        <end position="687"/>
    </location>
</feature>
<feature type="compositionally biased region" description="Low complexity" evidence="8">
    <location>
        <begin position="701"/>
        <end position="716"/>
    </location>
</feature>
<feature type="compositionally biased region" description="Acidic residues" evidence="8">
    <location>
        <begin position="1098"/>
        <end position="1123"/>
    </location>
</feature>
<feature type="compositionally biased region" description="Basic and acidic residues" evidence="8">
    <location>
        <begin position="1124"/>
        <end position="1144"/>
    </location>
</feature>
<feature type="compositionally biased region" description="Polar residues" evidence="8">
    <location>
        <begin position="1146"/>
        <end position="1155"/>
    </location>
</feature>
<feature type="compositionally biased region" description="Low complexity" evidence="8">
    <location>
        <begin position="1163"/>
        <end position="1172"/>
    </location>
</feature>
<feature type="compositionally biased region" description="Low complexity" evidence="8">
    <location>
        <begin position="1242"/>
        <end position="1253"/>
    </location>
</feature>
<feature type="compositionally biased region" description="Low complexity" evidence="8">
    <location>
        <begin position="1680"/>
        <end position="1694"/>
    </location>
</feature>
<feature type="active site" evidence="5">
    <location>
        <position position="925"/>
    </location>
</feature>
<feature type="active site" evidence="5">
    <location>
        <position position="970"/>
    </location>
</feature>
<feature type="splice variant" id="VSP_058531" description="In isoform d." evidence="17">
    <original>MNWDTLKGVLKTRRLTKRTIPAYIHP</original>
    <variation>MTLWEIMQNSASNSIQRSLNQSMHRSHTEATVS</variation>
    <location>
        <begin position="1"/>
        <end position="26"/>
    </location>
</feature>
<feature type="splice variant" id="VSP_058532" description="In isoform e." evidence="17">
    <original>G</original>
    <variation>GGRVERWKGFG</variation>
    <location>
        <position position="565"/>
    </location>
</feature>
<feature type="splice variant" id="VSP_058533" description="In isoform b, isoform d and isoform e." evidence="17">
    <location>
        <begin position="1727"/>
        <end position="1728"/>
    </location>
</feature>
<feature type="splice variant" id="VSP_058534" description="In isoform b, isoform c, isoform d and isoform e." evidence="17">
    <original>SMLQALSLARKRSNDL</original>
    <variation>M</variation>
    <location>
        <begin position="1802"/>
        <end position="1817"/>
    </location>
</feature>
<feature type="splice variant" id="VSP_058535" description="In isoform c." evidence="17">
    <original>EFHEMAKIIREGIPKKDETYYMIYYSGLPGEDI</original>
    <variation>GRRVESTTSSSTTTRKISLSSVRSIGLPRKFSKFGKSLTMDAGPK</variation>
    <location>
        <begin position="1866"/>
        <end position="1898"/>
    </location>
</feature>
<feature type="splice variant" id="VSP_058536" description="In isoform b, isoform d and isoform e." evidence="17">
    <original>EFHEMAKIIREGIPKKDETY</original>
    <variation>VRSFISKLEAAKASMDPRHE</variation>
    <location>
        <begin position="1866"/>
        <end position="1885"/>
    </location>
</feature>
<feature type="splice variant" id="VSP_058537" description="In isoform b, isoform d and isoform e." evidence="17">
    <location>
        <begin position="1886"/>
        <end position="1898"/>
    </location>
</feature>
<keyword id="KW-0025">Alternative splicing</keyword>
<keyword id="KW-0106">Calcium</keyword>
<keyword id="KW-0344">Guanine-nucleotide releasing factor</keyword>
<keyword id="KW-0378">Hydrolase</keyword>
<keyword id="KW-0442">Lipid degradation</keyword>
<keyword id="KW-0443">Lipid metabolism</keyword>
<keyword id="KW-0479">Metal-binding</keyword>
<keyword id="KW-1185">Reference proteome</keyword>
<keyword id="KW-0677">Repeat</keyword>
<keyword id="KW-0807">Transducer</keyword>
<sequence length="1898" mass="212879">MNWDTLKGVLKTRRLTKRTIPAYIHPTSRSDSTSSTQSATAGFILNEEPITLFRLELERLQYILHFPEEVAFQLSSTEYQLFYSIQPMDYVRYVSCDLTSVPVSENPSPVRNLVKRLSEVSSWITHVIVSQPTHDDRKVALTAILRIVETCWNIGNFNAAVEVLMGLKSEKLRPFWLSLRQEEKSQFDSLCETLLPANQALPSQAYINAVQRALRMPQSRVIPFFGIFLRDLYAIVNDLPNIVVIGQEGETQKLEFMSDPNGEDHFSSRIGVGGLLNADKINLVAIVLDNLELFHRHSRTMIKLLEEQAVPPIQIPQNEREQKEKEAKTYEPVQVVRGSSHGVALIPLDTLTFDLDVIQRLQHGTTVIHYEPDSGRSNLCLLRLDPSCGQINWHKISYSVNKDPKEKDVLAKVSVSNLQPLDSGRGAPSPMPSGRTPGTGGVGVEEGELKLSVVKGVELVDSYDIDIEAIYRRHSMEEMSVPVSCWKVSHGQLLSDNEFIYFLAPQQIAQFWTNGLQSVVKSLQGQQRYPDRRMLWIKNVYLSLYEITGESNCGPRPFEALQAFGLSQTNTNATRPNDSSLSSEPGGAKSRLKNLKNAMQKKLRGASREGSRSQSPQPHSPLVRPPSIKSQISSQSGPPGPNSPGYLLKPRGEPANSDAGDIDSIYTPRSRTPTSSSYGGRSVGGRSCKSWRSRGGETPNSGSISSSGQMSIQVSGLSGPSGKEFQEKPLTLVEFAELFRLFNTRMRKDLRDVFNDVLSTATTPQHCPKRERDRHSPRMQSRLASVSNSYNADFLSNDFLTRNTAVTSHHISEKQNKIYNALALASVNSMGGLMDTSRSSMLTPQMLRAFVNTHQMEQIDEQTAIKLIQDHEPDGICRQKNQMSFEGFTRFLCDPVNFAFVPETIEPDEEDLRYPLSHYYINSSHNTYLTGHQLKGPSSSEMYRQVLLTGCRCVELDCWDGDDGLPLIYHGHTLVSKIGFRQVVEIIKKSAFITSDLPVILSIENHCSLQQQAKMAQMFKTVLGDLLVSNFLFEADFSDSPRLPCPLQMKNKILIKNKKMIVDPPTPLPMIERGAVQRGETQLNLHRKQSKNSYESSTVDEVEDDDLDEFLDDEENEEDDQEEVQVRSEKEDSPKTSKRAEKSARNIKQQDSLCSDHSVEQAKPSTSKTTSKTNDRKTEDEVLYAQLAQNAIRNQQPRKNNTGVQIAPELSDIVIYMQATKFKGFPPVDGIQSPRIMEEGPASASLSFSSRARTPSNLLNTPAPPRRQRSSTQLSQELAAEFLGSVRANATATCYQVTSLNENAAKKLMKRHPAKCVSYTRDHLIRTYPSAKHYDSSNFNPINCWAHGMQMVALNFQTPDVIMAVNQAMFEQSGNCGYQLKPRCLWDESHLLYNKFLPLSKDIAGHSALLLNLTIISGQHVYPNTHYASLYVEIEVIGIHNDCVREKSKVVQRNSVNPIWNHTTQLRIACVDLAFLRIAVCDSGQNGRVVAHRVVPVKCIRPGFRHLPLRTPTNLPIDNAMIFLRTRFEQEEHIYLHDDDSNTYCNLEHTLAYRTDLTPNLSPTPILKKQIFVLRITGAFADETAITVHSESGSTVKTVMQQALLNAGKNADQVEEYVLIEESLPAPSGEDPIEQRVLPLNEPIMDAVACWNGSMRRFVLRKKGSDPSSRAWITSIIKSGTSGSSTSVSPSPLTKDGHVKSASSNQLHGRSLDTDAFGEHLEVTEGKWLNPRARSMGDTFLVCVHNVSEDQPYAILRAGIHSTAADIIRQVFVKARRSNVDDSEFVLVEETCDDPKLNQGQSMLQALSLARKRSNDLTPKYPNNRTTSRVLGQNENVWKAQSRWKSMGRFVLENRKDTVHATLEKEFHEMAKIIREGIPKKDETYYMIYYSGLPGEDI</sequence>
<evidence type="ECO:0000250" key="1">
    <source>
        <dbReference type="UniProtKB" id="Q9P212"/>
    </source>
</evidence>
<evidence type="ECO:0000255" key="2">
    <source>
        <dbReference type="PROSITE-ProRule" id="PRU00041"/>
    </source>
</evidence>
<evidence type="ECO:0000255" key="3">
    <source>
        <dbReference type="PROSITE-ProRule" id="PRU00166"/>
    </source>
</evidence>
<evidence type="ECO:0000255" key="4">
    <source>
        <dbReference type="PROSITE-ProRule" id="PRU00168"/>
    </source>
</evidence>
<evidence type="ECO:0000255" key="5">
    <source>
        <dbReference type="PROSITE-ProRule" id="PRU00270"/>
    </source>
</evidence>
<evidence type="ECO:0000255" key="6">
    <source>
        <dbReference type="PROSITE-ProRule" id="PRU00271"/>
    </source>
</evidence>
<evidence type="ECO:0000255" key="7">
    <source>
        <dbReference type="RuleBase" id="RU361133"/>
    </source>
</evidence>
<evidence type="ECO:0000256" key="8">
    <source>
        <dbReference type="SAM" id="MobiDB-lite"/>
    </source>
</evidence>
<evidence type="ECO:0000269" key="9">
    <source>
    </source>
</evidence>
<evidence type="ECO:0000269" key="10">
    <source>
    </source>
</evidence>
<evidence type="ECO:0000269" key="11">
    <source>
    </source>
</evidence>
<evidence type="ECO:0000269" key="12">
    <source>
    </source>
</evidence>
<evidence type="ECO:0000269" key="13">
    <source>
    </source>
</evidence>
<evidence type="ECO:0000269" key="14">
    <source>
    </source>
</evidence>
<evidence type="ECO:0000269" key="15">
    <source>
    </source>
</evidence>
<evidence type="ECO:0000303" key="16">
    <source>
    </source>
</evidence>
<evidence type="ECO:0000305" key="17"/>
<evidence type="ECO:0000312" key="18">
    <source>
        <dbReference type="EMBL" id="AAC38963.1"/>
    </source>
</evidence>
<evidence type="ECO:0000312" key="19">
    <source>
        <dbReference type="EMBL" id="CAQ51495.1"/>
    </source>
</evidence>
<evidence type="ECO:0000312" key="20">
    <source>
        <dbReference type="Proteomes" id="UP000001940"/>
    </source>
</evidence>
<evidence type="ECO:0000312" key="21">
    <source>
        <dbReference type="WormBase" id="F31B12.1a"/>
    </source>
</evidence>
<evidence type="ECO:0000312" key="22">
    <source>
        <dbReference type="WormBase" id="F31B12.1b"/>
    </source>
</evidence>
<evidence type="ECO:0000312" key="23">
    <source>
        <dbReference type="WormBase" id="F31B12.1c"/>
    </source>
</evidence>
<evidence type="ECO:0000312" key="24">
    <source>
        <dbReference type="WormBase" id="F31B12.1d"/>
    </source>
</evidence>
<evidence type="ECO:0000312" key="25">
    <source>
        <dbReference type="WormBase" id="F31B12.1e"/>
    </source>
</evidence>
<accession>G5EFI8</accession>
<accession>G5ED55</accession>
<accession>G5EEI0</accession>
<accession>G5EEJ6</accession>
<accession>G5EFI5</accession>
<proteinExistence type="evidence at protein level"/>
<protein>
    <recommendedName>
        <fullName evidence="1">1-phosphatidylinositol 4,5-bisphosphate phosphodiesterase epsilon-1</fullName>
        <ecNumber evidence="7 15">3.1.4.11</ecNumber>
    </recommendedName>
    <alternativeName>
        <fullName evidence="17">Phosphoinositide phospholipase C-epsilon plc-1</fullName>
    </alternativeName>
    <alternativeName>
        <fullName evidence="16">Phosphoinositide-specific phospholipase PLC210</fullName>
    </alternativeName>
    <alternativeName>
        <fullName evidence="17">Phospholipase C-epsilon plc-1</fullName>
        <shortName evidence="17">PLC-epsilon plc-1</shortName>
    </alternativeName>
</protein>
<comment type="function">
    <text evidence="1 9 10 11 12 13 14 15">The production of the second messenger molecules diacylglycerol (DAG) and inositol 1,4,5-trisphosphate (IP3) is mediated by activated phosphatidylinositol-specific phospholipase C enzymes (PubMed:9497345). plc-1 is a bifunctional enzyme which also regulates small GTPases of the Ras superfamily through its Ras guanine-exchange factor (RasGEF) activity (By similarity). By activating IP3 receptor itr-1-mediated intracellular Ca(2+) release via the production of IP3, regulates ovulation by controlling contraction and/or dilation of the distal spermatheca valve during oocyte entry and the timing of the dilation of the spermatheca-uterine valve during oocyte exit (PubMed:15194811, PubMed:15355798, PubMed:18369461, PubMed:23671426). In a similar manner, plays an essential role in epidermal morphogenesis by regulating migration of epidermal cells during ventral closure and to a lesser extent by regulating epidermal cell dorsal intercalation (PubMed:18369461). Involved in the immune response to S.aureus bacterium by activating kinase dkf-1 via the production of DAG which in turn activates transcription factor hlh-30 (PubMed:27184844). In ASER neurons, required for adjusting the orientation behavior in salt gradients based on the memory of previous salt concentration encountered (PubMed:23887678).</text>
</comment>
<comment type="catalytic activity">
    <reaction evidence="7 15">
        <text>a 1,2-diacyl-sn-glycero-3-phospho-(1D-myo-inositol-4,5-bisphosphate) + H2O = 1D-myo-inositol 1,4,5-trisphosphate + a 1,2-diacyl-sn-glycerol + H(+)</text>
        <dbReference type="Rhea" id="RHEA:33179"/>
        <dbReference type="ChEBI" id="CHEBI:15377"/>
        <dbReference type="ChEBI" id="CHEBI:15378"/>
        <dbReference type="ChEBI" id="CHEBI:17815"/>
        <dbReference type="ChEBI" id="CHEBI:58456"/>
        <dbReference type="ChEBI" id="CHEBI:203600"/>
        <dbReference type="EC" id="3.1.4.11"/>
    </reaction>
</comment>
<comment type="cofactor">
    <cofactor evidence="15">
        <name>Ca(2+)</name>
        <dbReference type="ChEBI" id="CHEBI:29108"/>
    </cofactor>
</comment>
<comment type="subunit">
    <text evidence="15">Interacts (via Ras-associating domain 1) with let-60 (in GTP-bound form).</text>
</comment>
<comment type="alternative products">
    <event type="alternative splicing"/>
    <isoform>
        <id>G5EFI8-1</id>
        <name evidence="21">a</name>
        <sequence type="displayed"/>
    </isoform>
    <isoform>
        <id>G5EFI8-2</id>
        <name evidence="22">b</name>
        <sequence type="described" ref="VSP_058533 VSP_058534 VSP_058536 VSP_058537"/>
    </isoform>
    <isoform>
        <id>G5EFI8-3</id>
        <name evidence="23">c</name>
        <sequence type="described" ref="VSP_058534 VSP_058535"/>
    </isoform>
    <isoform>
        <id>G5EFI8-4</id>
        <name evidence="24">d</name>
        <sequence type="described" ref="VSP_058531 VSP_058533 VSP_058534 VSP_058536 VSP_058537"/>
    </isoform>
    <isoform>
        <id>G5EFI8-5</id>
        <name evidence="25">e</name>
        <sequence type="described" ref="VSP_058532 VSP_058533 VSP_058534 VSP_058536 VSP_058537"/>
    </isoform>
</comment>
<comment type="tissue specificity">
    <text evidence="10 13">Expressed in the spermatheca, vulva, intestine and excretory cells (PubMed:15355798). Expressed in sensory neurons AWC, AFD, ASE, ASG and BAG, interneurons, ventral nerve cord neurons and tail neurons (PubMed:15355798, PubMed:23887678). Expressed in body muscles (PubMed:23887678).</text>
</comment>
<comment type="domain">
    <text evidence="15">Only Ras-associating 1 domain is involved in the binding to let-60.</text>
</comment>
<comment type="disruption phenotype">
    <text evidence="9 11 14">RNAi-mediated knockdown results in 52 percent of animals arrested at the embryonic stage (PubMed:18369461). RNAi-mediated knockdown in larvae causes a severe decrease in brood size (PubMed:15194811). In 20 percent of animals, spermatheca dilatation is impaired causing oocyte retention in the gonad and persistent triggering of ovulatory contractions (PubMed:15194811). In L4 larvae, results in a shortened lifespan (PubMed:27184844). Prevents transcription factor hlh-30 nuclear translocation and increases lifespan in response to S.aureus infection (PubMed:27184844).</text>
</comment>
<gene>
    <name evidence="21" type="primary">plc-1</name>
    <name evidence="21" type="ORF">F31B12.1</name>
</gene>
<reference evidence="18" key="1">
    <citation type="journal article" date="1998" name="J. Biol. Chem.">
        <title>Identification of PLC210, a Caenorhabditis elegans phospholipase C, as a putative effector of Ras.</title>
        <authorList>
            <person name="Shibatohge M."/>
            <person name="Kariya K."/>
            <person name="Liao Y."/>
            <person name="Hu C.-D."/>
            <person name="Watari Y."/>
            <person name="Goshima M."/>
            <person name="Shima F."/>
            <person name="Kataoka T."/>
        </authorList>
    </citation>
    <scope>NUCLEOTIDE SEQUENCE [MRNA] (ISOFORM A)</scope>
    <scope>FUNCTION</scope>
    <scope>CATALYTIC ACTIVITY</scope>
    <scope>COFACTOR</scope>
    <scope>INTERACTION WITH LET-60</scope>
    <scope>DOMAIN</scope>
</reference>
<reference evidence="19" key="2">
    <citation type="journal article" date="2008" name="PLoS Genet.">
        <title>Phospholipase C-epsilon regulates epidermal morphogenesis in Caenorhabditis elegans.</title>
        <authorList>
            <person name="Vazquez-Manrique R.P."/>
            <person name="Nagy A.I."/>
            <person name="Legg J.C."/>
            <person name="Bales O.A."/>
            <person name="Ly S."/>
            <person name="Baylis H.A."/>
        </authorList>
    </citation>
    <scope>NUCLEOTIDE SEQUENCE [MRNA] (ISOFORM E)</scope>
    <scope>FUNCTION</scope>
    <scope>DISRUPTION PHENOTYPE</scope>
</reference>
<reference evidence="20" key="3">
    <citation type="journal article" date="1998" name="Science">
        <title>Genome sequence of the nematode C. elegans: a platform for investigating biology.</title>
        <authorList>
            <consortium name="The C. elegans sequencing consortium"/>
        </authorList>
    </citation>
    <scope>NUCLEOTIDE SEQUENCE [LARGE SCALE GENOMIC DNA]</scope>
    <source>
        <strain evidence="20">Bristol N2</strain>
    </source>
</reference>
<reference evidence="17" key="4">
    <citation type="journal article" date="2004" name="Dev. Biol.">
        <title>Phospholipase Cepsilon regulates ovulation in Caenorhabditis elegans.</title>
        <authorList>
            <person name="Kariya K."/>
            <person name="Bui Y.K."/>
            <person name="Gao X."/>
            <person name="Sternberg P.W."/>
            <person name="Kataoka T."/>
        </authorList>
    </citation>
    <scope>FUNCTION</scope>
    <scope>TISSUE SPECIFICITY</scope>
</reference>
<reference evidence="17" key="5">
    <citation type="journal article" date="2004" name="Mol. Biol. Cell">
        <title>Inositol 1,4,5-trisphosphate signaling regulates rhythmic contractile activity of myoepithelial sheath cells in Caenorhabditis elegans.</title>
        <authorList>
            <person name="Yin X."/>
            <person name="Gower N.J."/>
            <person name="Baylis H.A."/>
            <person name="Strange K."/>
        </authorList>
    </citation>
    <scope>FUNCTION</scope>
    <scope>DISRUPTION PHENOTYPE</scope>
</reference>
<reference evidence="17" key="6">
    <citation type="journal article" date="2013" name="Nat. Commun.">
        <title>Concentration memory-dependent synaptic plasticity of a taste circuit regulates salt concentration chemotaxis in Caenorhabditis elegans.</title>
        <authorList>
            <person name="Kunitomo H."/>
            <person name="Sato H."/>
            <person name="Iwata R."/>
            <person name="Satoh Y."/>
            <person name="Ohno H."/>
            <person name="Yamada K."/>
            <person name="Iino Y."/>
        </authorList>
    </citation>
    <scope>FUNCTION</scope>
    <scope>TISSUE SPECIFICITY</scope>
</reference>
<reference evidence="17" key="7">
    <citation type="journal article" date="2013" name="PLoS Genet.">
        <title>Filamin and phospholipase C-epsilon are required for calcium signaling in the Caenorhabditis elegans spermatheca.</title>
        <authorList>
            <person name="Kovacevic I."/>
            <person name="Orozco J.M."/>
            <person name="Cram E.J."/>
        </authorList>
    </citation>
    <scope>FUNCTION</scope>
</reference>
<reference evidence="17" key="8">
    <citation type="journal article" date="2016" name="Cell Rep.">
        <title>An evolutionarily conserved PLC-PKD-TFEB pathway for host defense.</title>
        <authorList>
            <person name="Najibi M."/>
            <person name="Labed S.A."/>
            <person name="Visvikis O."/>
            <person name="Irazoqui J.E."/>
        </authorList>
    </citation>
    <scope>FUNCTION</scope>
    <scope>DISRUPTION PHENOTYPE</scope>
</reference>
<organism evidence="20">
    <name type="scientific">Caenorhabditis elegans</name>
    <dbReference type="NCBI Taxonomy" id="6239"/>
    <lineage>
        <taxon>Eukaryota</taxon>
        <taxon>Metazoa</taxon>
        <taxon>Ecdysozoa</taxon>
        <taxon>Nematoda</taxon>
        <taxon>Chromadorea</taxon>
        <taxon>Rhabditida</taxon>
        <taxon>Rhabditina</taxon>
        <taxon>Rhabditomorpha</taxon>
        <taxon>Rhabditoidea</taxon>
        <taxon>Rhabditidae</taxon>
        <taxon>Peloderinae</taxon>
        <taxon>Caenorhabditis</taxon>
    </lineage>
</organism>
<name>PLCE1_CAEEL</name>